<protein>
    <recommendedName>
        <fullName evidence="1">Acetate kinase</fullName>
        <ecNumber evidence="1">2.7.2.1</ecNumber>
    </recommendedName>
    <alternativeName>
        <fullName evidence="1">Acetokinase</fullName>
    </alternativeName>
</protein>
<feature type="chain" id="PRO_1000002269" description="Acetate kinase">
    <location>
        <begin position="1"/>
        <end position="396"/>
    </location>
</feature>
<feature type="active site" description="Proton donor/acceptor" evidence="1">
    <location>
        <position position="146"/>
    </location>
</feature>
<feature type="binding site" evidence="1">
    <location>
        <position position="8"/>
    </location>
    <ligand>
        <name>Mg(2+)</name>
        <dbReference type="ChEBI" id="CHEBI:18420"/>
    </ligand>
</feature>
<feature type="binding site" evidence="1">
    <location>
        <position position="15"/>
    </location>
    <ligand>
        <name>ATP</name>
        <dbReference type="ChEBI" id="CHEBI:30616"/>
    </ligand>
</feature>
<feature type="binding site" evidence="1">
    <location>
        <position position="89"/>
    </location>
    <ligand>
        <name>substrate</name>
    </ligand>
</feature>
<feature type="binding site" evidence="1">
    <location>
        <begin position="206"/>
        <end position="210"/>
    </location>
    <ligand>
        <name>ATP</name>
        <dbReference type="ChEBI" id="CHEBI:30616"/>
    </ligand>
</feature>
<feature type="binding site" evidence="1">
    <location>
        <begin position="283"/>
        <end position="285"/>
    </location>
    <ligand>
        <name>ATP</name>
        <dbReference type="ChEBI" id="CHEBI:30616"/>
    </ligand>
</feature>
<feature type="binding site" evidence="1">
    <location>
        <begin position="331"/>
        <end position="335"/>
    </location>
    <ligand>
        <name>ATP</name>
        <dbReference type="ChEBI" id="CHEBI:30616"/>
    </ligand>
</feature>
<feature type="binding site" evidence="1">
    <location>
        <position position="383"/>
    </location>
    <ligand>
        <name>Mg(2+)</name>
        <dbReference type="ChEBI" id="CHEBI:18420"/>
    </ligand>
</feature>
<feature type="site" description="Transition state stabilizer" evidence="1">
    <location>
        <position position="178"/>
    </location>
</feature>
<feature type="site" description="Transition state stabilizer" evidence="1">
    <location>
        <position position="239"/>
    </location>
</feature>
<comment type="function">
    <text evidence="1">Catalyzes the formation of acetyl phosphate from acetate and ATP. Can also catalyze the reverse reaction.</text>
</comment>
<comment type="catalytic activity">
    <reaction evidence="1">
        <text>acetate + ATP = acetyl phosphate + ADP</text>
        <dbReference type="Rhea" id="RHEA:11352"/>
        <dbReference type="ChEBI" id="CHEBI:22191"/>
        <dbReference type="ChEBI" id="CHEBI:30089"/>
        <dbReference type="ChEBI" id="CHEBI:30616"/>
        <dbReference type="ChEBI" id="CHEBI:456216"/>
        <dbReference type="EC" id="2.7.2.1"/>
    </reaction>
</comment>
<comment type="cofactor">
    <cofactor evidence="1">
        <name>Mg(2+)</name>
        <dbReference type="ChEBI" id="CHEBI:18420"/>
    </cofactor>
    <cofactor evidence="1">
        <name>Mn(2+)</name>
        <dbReference type="ChEBI" id="CHEBI:29035"/>
    </cofactor>
    <text evidence="1">Mg(2+). Can also accept Mn(2+).</text>
</comment>
<comment type="pathway">
    <text evidence="1">Metabolic intermediate biosynthesis; acetyl-CoA biosynthesis; acetyl-CoA from acetate: step 1/2.</text>
</comment>
<comment type="subunit">
    <text evidence="1">Homodimer.</text>
</comment>
<comment type="subcellular location">
    <subcellularLocation>
        <location evidence="1">Cytoplasm</location>
    </subcellularLocation>
</comment>
<comment type="similarity">
    <text evidence="1">Belongs to the acetokinase family.</text>
</comment>
<gene>
    <name evidence="1" type="primary">ackA</name>
    <name type="ordered locus">SPD_1853</name>
</gene>
<evidence type="ECO:0000255" key="1">
    <source>
        <dbReference type="HAMAP-Rule" id="MF_00020"/>
    </source>
</evidence>
<organism>
    <name type="scientific">Streptococcus pneumoniae serotype 2 (strain D39 / NCTC 7466)</name>
    <dbReference type="NCBI Taxonomy" id="373153"/>
    <lineage>
        <taxon>Bacteria</taxon>
        <taxon>Bacillati</taxon>
        <taxon>Bacillota</taxon>
        <taxon>Bacilli</taxon>
        <taxon>Lactobacillales</taxon>
        <taxon>Streptococcaceae</taxon>
        <taxon>Streptococcus</taxon>
    </lineage>
</organism>
<dbReference type="EC" id="2.7.2.1" evidence="1"/>
<dbReference type="EMBL" id="CP000410">
    <property type="protein sequence ID" value="ABJ54153.1"/>
    <property type="molecule type" value="Genomic_DNA"/>
</dbReference>
<dbReference type="RefSeq" id="WP_000167757.1">
    <property type="nucleotide sequence ID" value="NZ_JAMLJR010000015.1"/>
</dbReference>
<dbReference type="SMR" id="Q04IC8"/>
<dbReference type="PaxDb" id="373153-SPD_1853"/>
<dbReference type="KEGG" id="spd:SPD_1853"/>
<dbReference type="eggNOG" id="COG0282">
    <property type="taxonomic scope" value="Bacteria"/>
</dbReference>
<dbReference type="HOGENOM" id="CLU_020352_0_1_9"/>
<dbReference type="BioCyc" id="SPNE373153:G1G6V-1998-MONOMER"/>
<dbReference type="UniPathway" id="UPA00340">
    <property type="reaction ID" value="UER00458"/>
</dbReference>
<dbReference type="Proteomes" id="UP000001452">
    <property type="component" value="Chromosome"/>
</dbReference>
<dbReference type="GO" id="GO:0005737">
    <property type="term" value="C:cytoplasm"/>
    <property type="evidence" value="ECO:0007669"/>
    <property type="project" value="UniProtKB-SubCell"/>
</dbReference>
<dbReference type="GO" id="GO:0008776">
    <property type="term" value="F:acetate kinase activity"/>
    <property type="evidence" value="ECO:0007669"/>
    <property type="project" value="UniProtKB-UniRule"/>
</dbReference>
<dbReference type="GO" id="GO:0005524">
    <property type="term" value="F:ATP binding"/>
    <property type="evidence" value="ECO:0007669"/>
    <property type="project" value="UniProtKB-KW"/>
</dbReference>
<dbReference type="GO" id="GO:0000287">
    <property type="term" value="F:magnesium ion binding"/>
    <property type="evidence" value="ECO:0007669"/>
    <property type="project" value="UniProtKB-UniRule"/>
</dbReference>
<dbReference type="GO" id="GO:0006083">
    <property type="term" value="P:acetate metabolic process"/>
    <property type="evidence" value="ECO:0007669"/>
    <property type="project" value="TreeGrafter"/>
</dbReference>
<dbReference type="GO" id="GO:0006085">
    <property type="term" value="P:acetyl-CoA biosynthetic process"/>
    <property type="evidence" value="ECO:0007669"/>
    <property type="project" value="UniProtKB-UniRule"/>
</dbReference>
<dbReference type="CDD" id="cd24010">
    <property type="entry name" value="ASKHA_NBD_AcK_PK"/>
    <property type="match status" value="1"/>
</dbReference>
<dbReference type="Gene3D" id="3.30.420.40">
    <property type="match status" value="2"/>
</dbReference>
<dbReference type="HAMAP" id="MF_00020">
    <property type="entry name" value="Acetate_kinase"/>
    <property type="match status" value="1"/>
</dbReference>
<dbReference type="InterPro" id="IPR004372">
    <property type="entry name" value="Ac/propionate_kinase"/>
</dbReference>
<dbReference type="InterPro" id="IPR000890">
    <property type="entry name" value="Aliphatic_acid_kin_short-chain"/>
</dbReference>
<dbReference type="InterPro" id="IPR023865">
    <property type="entry name" value="Aliphatic_acid_kinase_CS"/>
</dbReference>
<dbReference type="InterPro" id="IPR043129">
    <property type="entry name" value="ATPase_NBD"/>
</dbReference>
<dbReference type="NCBIfam" id="TIGR00016">
    <property type="entry name" value="ackA"/>
    <property type="match status" value="1"/>
</dbReference>
<dbReference type="PANTHER" id="PTHR21060">
    <property type="entry name" value="ACETATE KINASE"/>
    <property type="match status" value="1"/>
</dbReference>
<dbReference type="PANTHER" id="PTHR21060:SF15">
    <property type="entry name" value="ACETATE KINASE-RELATED"/>
    <property type="match status" value="1"/>
</dbReference>
<dbReference type="Pfam" id="PF00871">
    <property type="entry name" value="Acetate_kinase"/>
    <property type="match status" value="1"/>
</dbReference>
<dbReference type="PIRSF" id="PIRSF000722">
    <property type="entry name" value="Acetate_prop_kin"/>
    <property type="match status" value="1"/>
</dbReference>
<dbReference type="PRINTS" id="PR00471">
    <property type="entry name" value="ACETATEKNASE"/>
</dbReference>
<dbReference type="SUPFAM" id="SSF53067">
    <property type="entry name" value="Actin-like ATPase domain"/>
    <property type="match status" value="2"/>
</dbReference>
<dbReference type="PROSITE" id="PS01075">
    <property type="entry name" value="ACETATE_KINASE_1"/>
    <property type="match status" value="1"/>
</dbReference>
<dbReference type="PROSITE" id="PS01076">
    <property type="entry name" value="ACETATE_KINASE_2"/>
    <property type="match status" value="1"/>
</dbReference>
<accession>Q04IC8</accession>
<sequence length="396" mass="43342">MTKTIAINAGSSSLKWQLYLMPEEKVLAKGLIERIGLKDSISTVKFDGRSEQQILDIENHIQAVKILLDDLIRFDIIKAYDEITGVGHRVVAGGEYFKESTVVEGDVLEKVEELSLLAPLHNPANAAGVRAFKELLPDITSVVVFDTSFHTSMPEKAYRYPLPTKYYTENKVRKYGAHGTSHQFVAGEAAKLLGRPLEDLKLITCHIGNGGSITAVKAGKSVDTSMGFTPLGGIMMGTRTGDIDPAIIPYLMQYTEDFNTPEDISRVLNRESGLLGVSANSSDMRDIEAAVAEGNHEASLAYEMYVDRIQKHIGQYLAVLNGADAIVFTAGVGENAESFRRDVISGISWFGCDVDDEKNVFGVTGDISTEAAKIRVLVIPTDEELVIARDVERLKK</sequence>
<keyword id="KW-0067">ATP-binding</keyword>
<keyword id="KW-0963">Cytoplasm</keyword>
<keyword id="KW-0418">Kinase</keyword>
<keyword id="KW-0460">Magnesium</keyword>
<keyword id="KW-0479">Metal-binding</keyword>
<keyword id="KW-0547">Nucleotide-binding</keyword>
<keyword id="KW-1185">Reference proteome</keyword>
<keyword id="KW-0808">Transferase</keyword>
<reference key="1">
    <citation type="journal article" date="2007" name="J. Bacteriol.">
        <title>Genome sequence of Avery's virulent serotype 2 strain D39 of Streptococcus pneumoniae and comparison with that of unencapsulated laboratory strain R6.</title>
        <authorList>
            <person name="Lanie J.A."/>
            <person name="Ng W.-L."/>
            <person name="Kazmierczak K.M."/>
            <person name="Andrzejewski T.M."/>
            <person name="Davidsen T.M."/>
            <person name="Wayne K.J."/>
            <person name="Tettelin H."/>
            <person name="Glass J.I."/>
            <person name="Winkler M.E."/>
        </authorList>
    </citation>
    <scope>NUCLEOTIDE SEQUENCE [LARGE SCALE GENOMIC DNA]</scope>
    <source>
        <strain>D39 / NCTC 7466</strain>
    </source>
</reference>
<proteinExistence type="inferred from homology"/>
<name>ACKA_STRP2</name>